<keyword id="KW-0133">Cell shape</keyword>
<keyword id="KW-0961">Cell wall biogenesis/degradation</keyword>
<keyword id="KW-0413">Isomerase</keyword>
<keyword id="KW-0573">Peptidoglycan synthesis</keyword>
<keyword id="KW-1185">Reference proteome</keyword>
<comment type="function">
    <text evidence="1">Provides the (R)-glutamate required for cell wall biosynthesis.</text>
</comment>
<comment type="catalytic activity">
    <reaction evidence="1">
        <text>L-glutamate = D-glutamate</text>
        <dbReference type="Rhea" id="RHEA:12813"/>
        <dbReference type="ChEBI" id="CHEBI:29985"/>
        <dbReference type="ChEBI" id="CHEBI:29986"/>
        <dbReference type="EC" id="5.1.1.3"/>
    </reaction>
</comment>
<comment type="pathway">
    <text evidence="1">Cell wall biogenesis; peptidoglycan biosynthesis.</text>
</comment>
<comment type="similarity">
    <text evidence="1">Belongs to the aspartate/glutamate racemases family.</text>
</comment>
<gene>
    <name evidence="1" type="primary">murI</name>
    <name type="ordered locus">Gmet_0547</name>
</gene>
<feature type="chain" id="PRO_1000047567" description="Glutamate racemase">
    <location>
        <begin position="1"/>
        <end position="270"/>
    </location>
</feature>
<feature type="active site" description="Proton donor/acceptor" evidence="1">
    <location>
        <position position="73"/>
    </location>
</feature>
<feature type="active site" description="Proton donor/acceptor" evidence="1">
    <location>
        <position position="184"/>
    </location>
</feature>
<feature type="binding site" evidence="1">
    <location>
        <begin position="10"/>
        <end position="11"/>
    </location>
    <ligand>
        <name>substrate</name>
    </ligand>
</feature>
<feature type="binding site" evidence="1">
    <location>
        <begin position="42"/>
        <end position="43"/>
    </location>
    <ligand>
        <name>substrate</name>
    </ligand>
</feature>
<feature type="binding site" evidence="1">
    <location>
        <begin position="74"/>
        <end position="75"/>
    </location>
    <ligand>
        <name>substrate</name>
    </ligand>
</feature>
<feature type="binding site" evidence="1">
    <location>
        <begin position="185"/>
        <end position="186"/>
    </location>
    <ligand>
        <name>substrate</name>
    </ligand>
</feature>
<dbReference type="EC" id="5.1.1.3" evidence="1"/>
<dbReference type="EMBL" id="CP000148">
    <property type="protein sequence ID" value="ABB30790.2"/>
    <property type="molecule type" value="Genomic_DNA"/>
</dbReference>
<dbReference type="RefSeq" id="WP_011365679.1">
    <property type="nucleotide sequence ID" value="NC_007517.1"/>
</dbReference>
<dbReference type="SMR" id="Q39Y84"/>
<dbReference type="STRING" id="269799.Gmet_0547"/>
<dbReference type="KEGG" id="gme:Gmet_0547"/>
<dbReference type="eggNOG" id="COG0796">
    <property type="taxonomic scope" value="Bacteria"/>
</dbReference>
<dbReference type="HOGENOM" id="CLU_052344_0_2_7"/>
<dbReference type="UniPathway" id="UPA00219"/>
<dbReference type="Proteomes" id="UP000007073">
    <property type="component" value="Chromosome"/>
</dbReference>
<dbReference type="GO" id="GO:0008881">
    <property type="term" value="F:glutamate racemase activity"/>
    <property type="evidence" value="ECO:0007669"/>
    <property type="project" value="UniProtKB-UniRule"/>
</dbReference>
<dbReference type="GO" id="GO:0071555">
    <property type="term" value="P:cell wall organization"/>
    <property type="evidence" value="ECO:0007669"/>
    <property type="project" value="UniProtKB-KW"/>
</dbReference>
<dbReference type="GO" id="GO:0009252">
    <property type="term" value="P:peptidoglycan biosynthetic process"/>
    <property type="evidence" value="ECO:0007669"/>
    <property type="project" value="UniProtKB-UniRule"/>
</dbReference>
<dbReference type="GO" id="GO:0008360">
    <property type="term" value="P:regulation of cell shape"/>
    <property type="evidence" value="ECO:0007669"/>
    <property type="project" value="UniProtKB-KW"/>
</dbReference>
<dbReference type="FunFam" id="3.40.50.1860:FF:000002">
    <property type="entry name" value="Glutamate racemase"/>
    <property type="match status" value="1"/>
</dbReference>
<dbReference type="Gene3D" id="3.40.50.1860">
    <property type="match status" value="2"/>
</dbReference>
<dbReference type="HAMAP" id="MF_00258">
    <property type="entry name" value="Glu_racemase"/>
    <property type="match status" value="1"/>
</dbReference>
<dbReference type="InterPro" id="IPR015942">
    <property type="entry name" value="Asp/Glu/hydantoin_racemase"/>
</dbReference>
<dbReference type="InterPro" id="IPR001920">
    <property type="entry name" value="Asp/Glu_race"/>
</dbReference>
<dbReference type="InterPro" id="IPR018187">
    <property type="entry name" value="Asp/Glu_racemase_AS_1"/>
</dbReference>
<dbReference type="InterPro" id="IPR033134">
    <property type="entry name" value="Asp/Glu_racemase_AS_2"/>
</dbReference>
<dbReference type="InterPro" id="IPR004391">
    <property type="entry name" value="Glu_race"/>
</dbReference>
<dbReference type="NCBIfam" id="TIGR00067">
    <property type="entry name" value="glut_race"/>
    <property type="match status" value="1"/>
</dbReference>
<dbReference type="PANTHER" id="PTHR21198">
    <property type="entry name" value="GLUTAMATE RACEMASE"/>
    <property type="match status" value="1"/>
</dbReference>
<dbReference type="PANTHER" id="PTHR21198:SF2">
    <property type="entry name" value="GLUTAMATE RACEMASE"/>
    <property type="match status" value="1"/>
</dbReference>
<dbReference type="Pfam" id="PF01177">
    <property type="entry name" value="Asp_Glu_race"/>
    <property type="match status" value="1"/>
</dbReference>
<dbReference type="SUPFAM" id="SSF53681">
    <property type="entry name" value="Aspartate/glutamate racemase"/>
    <property type="match status" value="2"/>
</dbReference>
<dbReference type="PROSITE" id="PS00923">
    <property type="entry name" value="ASP_GLU_RACEMASE_1"/>
    <property type="match status" value="1"/>
</dbReference>
<dbReference type="PROSITE" id="PS00924">
    <property type="entry name" value="ASP_GLU_RACEMASE_2"/>
    <property type="match status" value="1"/>
</dbReference>
<evidence type="ECO:0000255" key="1">
    <source>
        <dbReference type="HAMAP-Rule" id="MF_00258"/>
    </source>
</evidence>
<organism>
    <name type="scientific">Geobacter metallireducens (strain ATCC 53774 / DSM 7210 / GS-15)</name>
    <dbReference type="NCBI Taxonomy" id="269799"/>
    <lineage>
        <taxon>Bacteria</taxon>
        <taxon>Pseudomonadati</taxon>
        <taxon>Thermodesulfobacteriota</taxon>
        <taxon>Desulfuromonadia</taxon>
        <taxon>Geobacterales</taxon>
        <taxon>Geobacteraceae</taxon>
        <taxon>Geobacter</taxon>
    </lineage>
</organism>
<sequence>MPWKAIGIFDSGVGGLTVLKEIIKALPQEDTIYFGDTARVPYGTKSPETVTRYSLEIASFLVHRDIKLLVVACNTASACALEALQQTLSIPVVGVIEPGARRAAAVTRSGRVGVIGTEGTIRSSAYAKAIKRINPEVEVVTRACPLFVPLAEEGWTDNEVAHLTARTYLSGLREAGVDTLVLGCTHYPLLKRVIGETIGEEVKLVDSAEETARIVAEILRGGELLRPTSEQGNHHYFVSDVPAGFIRVGNRFLGGKLGDVYQVSLEAEKE</sequence>
<protein>
    <recommendedName>
        <fullName evidence="1">Glutamate racemase</fullName>
        <ecNumber evidence="1">5.1.1.3</ecNumber>
    </recommendedName>
</protein>
<name>MURI_GEOMG</name>
<accession>Q39Y84</accession>
<proteinExistence type="inferred from homology"/>
<reference key="1">
    <citation type="journal article" date="2009" name="BMC Microbiol.">
        <title>The genome sequence of Geobacter metallireducens: features of metabolism, physiology and regulation common and dissimilar to Geobacter sulfurreducens.</title>
        <authorList>
            <person name="Aklujkar M."/>
            <person name="Krushkal J."/>
            <person name="DiBartolo G."/>
            <person name="Lapidus A."/>
            <person name="Land M.L."/>
            <person name="Lovley D.R."/>
        </authorList>
    </citation>
    <scope>NUCLEOTIDE SEQUENCE [LARGE SCALE GENOMIC DNA]</scope>
    <source>
        <strain>ATCC 53774 / DSM 7210 / GS-15</strain>
    </source>
</reference>